<accession>B5G0G8</accession>
<feature type="chain" id="PRO_0000356161" description="Ragulator complex protein LAMTOR3">
    <location>
        <begin position="1"/>
        <end position="124"/>
    </location>
</feature>
<proteinExistence type="evidence at transcript level"/>
<dbReference type="EMBL" id="DQ215024">
    <property type="protein sequence ID" value="ACH44779.1"/>
    <property type="molecule type" value="mRNA"/>
</dbReference>
<dbReference type="EMBL" id="DQ215025">
    <property type="protein sequence ID" value="ACH44780.1"/>
    <property type="molecule type" value="mRNA"/>
</dbReference>
<dbReference type="EMBL" id="DQ215026">
    <property type="protein sequence ID" value="ACH44781.1"/>
    <property type="molecule type" value="mRNA"/>
</dbReference>
<dbReference type="EMBL" id="DQ215028">
    <property type="protein sequence ID" value="ACH44783.1"/>
    <property type="molecule type" value="mRNA"/>
</dbReference>
<dbReference type="RefSeq" id="XP_030126006.1">
    <property type="nucleotide sequence ID" value="XM_030270146.3"/>
</dbReference>
<dbReference type="SMR" id="B5G0G8"/>
<dbReference type="FunCoup" id="B5G0G8">
    <property type="interactions" value="833"/>
</dbReference>
<dbReference type="STRING" id="59729.ENSTGUP00000030181"/>
<dbReference type="Ensembl" id="ENSTGUT00000041470.1">
    <property type="protein sequence ID" value="ENSTGUP00000030181.1"/>
    <property type="gene ID" value="ENSTGUG00000018867.1"/>
</dbReference>
<dbReference type="GeneID" id="100190337"/>
<dbReference type="GeneTree" id="ENSGT00390000013159"/>
<dbReference type="InParanoid" id="B5G0G8"/>
<dbReference type="OMA" id="YQVIQMN"/>
<dbReference type="OrthoDB" id="343907at2759"/>
<dbReference type="Proteomes" id="UP000007754">
    <property type="component" value="Chromosome 4"/>
</dbReference>
<dbReference type="GO" id="GO:1990877">
    <property type="term" value="C:FNIP-folliculin RagC/D GAP"/>
    <property type="evidence" value="ECO:0007669"/>
    <property type="project" value="Ensembl"/>
</dbReference>
<dbReference type="GO" id="GO:0031902">
    <property type="term" value="C:late endosome membrane"/>
    <property type="evidence" value="ECO:0007669"/>
    <property type="project" value="UniProtKB-SubCell"/>
</dbReference>
<dbReference type="GO" id="GO:0005765">
    <property type="term" value="C:lysosomal membrane"/>
    <property type="evidence" value="ECO:0000250"/>
    <property type="project" value="UniProtKB"/>
</dbReference>
<dbReference type="GO" id="GO:0071986">
    <property type="term" value="C:Ragulator complex"/>
    <property type="evidence" value="ECO:0000250"/>
    <property type="project" value="UniProtKB"/>
</dbReference>
<dbReference type="GO" id="GO:0005085">
    <property type="term" value="F:guanyl-nucleotide exchange factor activity"/>
    <property type="evidence" value="ECO:0007669"/>
    <property type="project" value="Ensembl"/>
</dbReference>
<dbReference type="GO" id="GO:0019209">
    <property type="term" value="F:kinase activator activity"/>
    <property type="evidence" value="ECO:0007669"/>
    <property type="project" value="Ensembl"/>
</dbReference>
<dbReference type="GO" id="GO:0060090">
    <property type="term" value="F:molecular adaptor activity"/>
    <property type="evidence" value="ECO:0007669"/>
    <property type="project" value="Ensembl"/>
</dbReference>
<dbReference type="GO" id="GO:0071230">
    <property type="term" value="P:cellular response to amino acid stimulus"/>
    <property type="evidence" value="ECO:0000250"/>
    <property type="project" value="UniProtKB"/>
</dbReference>
<dbReference type="GO" id="GO:0043410">
    <property type="term" value="P:positive regulation of MAPK cascade"/>
    <property type="evidence" value="ECO:0007669"/>
    <property type="project" value="Ensembl"/>
</dbReference>
<dbReference type="GO" id="GO:0032008">
    <property type="term" value="P:positive regulation of TOR signaling"/>
    <property type="evidence" value="ECO:0000250"/>
    <property type="project" value="UniProtKB"/>
</dbReference>
<dbReference type="GO" id="GO:1904263">
    <property type="term" value="P:positive regulation of TORC1 signaling"/>
    <property type="evidence" value="ECO:0000250"/>
    <property type="project" value="UniProtKB"/>
</dbReference>
<dbReference type="GO" id="GO:0008104">
    <property type="term" value="P:protein localization"/>
    <property type="evidence" value="ECO:0000250"/>
    <property type="project" value="UniProtKB"/>
</dbReference>
<dbReference type="GO" id="GO:1902414">
    <property type="term" value="P:protein localization to cell junction"/>
    <property type="evidence" value="ECO:0007669"/>
    <property type="project" value="Ensembl"/>
</dbReference>
<dbReference type="FunFam" id="3.30.450.30:FF:000003">
    <property type="entry name" value="ragulator complex protein LAMTOR3 homolog"/>
    <property type="match status" value="1"/>
</dbReference>
<dbReference type="Gene3D" id="3.30.450.30">
    <property type="entry name" value="Dynein light chain 2a, cytoplasmic"/>
    <property type="match status" value="1"/>
</dbReference>
<dbReference type="InterPro" id="IPR015019">
    <property type="entry name" value="LAMTOR3"/>
</dbReference>
<dbReference type="PANTHER" id="PTHR13378:SF1">
    <property type="entry name" value="RAGULATOR COMPLEX PROTEIN LAMTOR3"/>
    <property type="match status" value="1"/>
</dbReference>
<dbReference type="PANTHER" id="PTHR13378">
    <property type="entry name" value="REGULATOR COMPLEX PROTEIN LAMTOR3"/>
    <property type="match status" value="1"/>
</dbReference>
<dbReference type="Pfam" id="PF08923">
    <property type="entry name" value="MAPKK1_Int"/>
    <property type="match status" value="1"/>
</dbReference>
<dbReference type="SMART" id="SM01278">
    <property type="entry name" value="MAPKK1_Int"/>
    <property type="match status" value="1"/>
</dbReference>
<dbReference type="SUPFAM" id="SSF103196">
    <property type="entry name" value="Roadblock/LC7 domain"/>
    <property type="match status" value="1"/>
</dbReference>
<evidence type="ECO:0000250" key="1">
    <source>
        <dbReference type="UniProtKB" id="O88653"/>
    </source>
</evidence>
<evidence type="ECO:0000250" key="2">
    <source>
        <dbReference type="UniProtKB" id="Q9UHA4"/>
    </source>
</evidence>
<evidence type="ECO:0000305" key="3"/>
<sequence length="124" mass="13680">MADDLKRFLYKKLPSVEGLHAIVVSDRDGVPVIKVANDNAPEHALRPGFLSTFALATDQGSKLGLSKNKSIICYYNTYQVVQFNRLPLVVSFIASSNANTGLIVSLEKELTPLFEELRQVVEVS</sequence>
<name>LTOR3_TAEGU</name>
<organism>
    <name type="scientific">Taeniopygia guttata</name>
    <name type="common">Zebra finch</name>
    <name type="synonym">Poephila guttata</name>
    <dbReference type="NCBI Taxonomy" id="59729"/>
    <lineage>
        <taxon>Eukaryota</taxon>
        <taxon>Metazoa</taxon>
        <taxon>Chordata</taxon>
        <taxon>Craniata</taxon>
        <taxon>Vertebrata</taxon>
        <taxon>Euteleostomi</taxon>
        <taxon>Archelosauria</taxon>
        <taxon>Archosauria</taxon>
        <taxon>Dinosauria</taxon>
        <taxon>Saurischia</taxon>
        <taxon>Theropoda</taxon>
        <taxon>Coelurosauria</taxon>
        <taxon>Aves</taxon>
        <taxon>Neognathae</taxon>
        <taxon>Neoaves</taxon>
        <taxon>Telluraves</taxon>
        <taxon>Australaves</taxon>
        <taxon>Passeriformes</taxon>
        <taxon>Passeroidea</taxon>
        <taxon>Estrildidae</taxon>
        <taxon>Estrildinae</taxon>
        <taxon>Taeniopygia</taxon>
    </lineage>
</organism>
<protein>
    <recommendedName>
        <fullName>Ragulator complex protein LAMTOR3</fullName>
    </recommendedName>
    <alternativeName>
        <fullName>Late endosomal/lysosomal adaptor and MAPK and MTOR activator 3</fullName>
    </alternativeName>
</protein>
<keyword id="KW-0967">Endosome</keyword>
<keyword id="KW-0472">Membrane</keyword>
<keyword id="KW-1185">Reference proteome</keyword>
<gene>
    <name type="primary">LAMTOR3</name>
</gene>
<comment type="function">
    <text evidence="2">As part of the Ragulator complex it is involved in amino acid sensing and activation of mTORC1, a signaling complex promoting cell growth in response to growth factors, energy levels, and amino acids. Activated by amino acids through a mechanism involving the lysosomal V-ATPase, the Ragulator plays a dual role for the small GTPases Rag (RagA/RRAGA, RagB/RRAGB, RagC/RRAGC and/or RagD/RRAGD): it (1) acts as a guanine nucleotide exchange factor (GEF), activating the small GTPases Rag and (2) mediates recruitment of Rag GTPases to the lysosome membrane. Activated Ragulator and Rag GTPases function as a scaffold recruiting mTORC1 to lysosomes where it is in turn activated.</text>
</comment>
<comment type="subunit">
    <text evidence="1 2">Part of the Ragulator complex composed of lamtor1, lamtor2, lamtor3, lamtor4 and lamtor5. The Ragulator complex interacts with slc38a9; the probable amino acid sensor. Component of the lysosomal folliculin complex (LFC).</text>
</comment>
<comment type="subcellular location">
    <subcellularLocation>
        <location evidence="1">Late endosome membrane</location>
        <topology evidence="1">Peripheral membrane protein</topology>
        <orientation evidence="1">Cytoplasmic side</orientation>
    </subcellularLocation>
    <text evidence="1">Recruited to lysosome and endosome membranes by LAMTOR1.</text>
</comment>
<comment type="similarity">
    <text evidence="3">Belongs to the LAMTOR3 family.</text>
</comment>
<reference key="1">
    <citation type="journal article" date="2006" name="Proc. Natl. Acad. Sci. U.S.A.">
        <title>A molecular neuroethological approach for identifying and characterizing a cascade of behaviorally regulated genes.</title>
        <authorList>
            <person name="Wada K."/>
            <person name="Howard J.T."/>
            <person name="McConnell P."/>
            <person name="Whitney O."/>
            <person name="Lints T."/>
            <person name="Rivas M.V."/>
            <person name="Horita H."/>
            <person name="Patterson M.A."/>
            <person name="White S.A."/>
            <person name="Scharff C."/>
            <person name="Haesler S."/>
            <person name="Zhao S."/>
            <person name="Sakaguchi H."/>
            <person name="Hagiwara M."/>
            <person name="Shiraki T."/>
            <person name="Hirozane-Kishikawa T."/>
            <person name="Skene P."/>
            <person name="Hayashizaki Y."/>
            <person name="Carninci P."/>
            <person name="Jarvis E.D."/>
        </authorList>
    </citation>
    <scope>NUCLEOTIDE SEQUENCE [LARGE SCALE MRNA]</scope>
    <source>
        <tissue>Brain</tissue>
    </source>
</reference>